<sequence length="313" mass="33128">MSFPTVFIDGDQGTTGLQIHARLRDRTDVRLLTLPAAERKDAARRADALNACDIAILCLPDAAAREAVGFIRNPAVRVIDASSAHRTQPDWVYGFPEMADGHAHDIAHAKRVTNPGCYPTGAIGLLRPLLQAGLLPRDYPVSIHAVSGYSGGGRAAVDAFESGDAAARALPLQVYGLALEHKHVPEIRQHAGLAHRPFFVPAYGAYRQGIVLTIPIELRLLPAGVTGERLHACLAHHYADARHVDVMPLADAAAATHLDPQALNGTNDLRLGVLVNADGGQVLLSAVFDNLGKGASGAAVQNLDLMLGARHAA</sequence>
<accession>B1K264</accession>
<protein>
    <recommendedName>
        <fullName evidence="1">N-acetyl-gamma-glutamyl-phosphate reductase</fullName>
        <shortName evidence="1">AGPR</shortName>
        <ecNumber evidence="1">1.2.1.38</ecNumber>
    </recommendedName>
    <alternativeName>
        <fullName evidence="1">N-acetyl-glutamate semialdehyde dehydrogenase</fullName>
        <shortName evidence="1">NAGSA dehydrogenase</shortName>
    </alternativeName>
</protein>
<dbReference type="EC" id="1.2.1.38" evidence="1"/>
<dbReference type="EMBL" id="CP000959">
    <property type="protein sequence ID" value="ACA93670.1"/>
    <property type="molecule type" value="Genomic_DNA"/>
</dbReference>
<dbReference type="RefSeq" id="WP_012339065.1">
    <property type="nucleotide sequence ID" value="NC_010515.1"/>
</dbReference>
<dbReference type="SMR" id="B1K264"/>
<dbReference type="GeneID" id="83051261"/>
<dbReference type="KEGG" id="bcm:Bcenmc03_4530"/>
<dbReference type="HOGENOM" id="CLU_077118_0_0_4"/>
<dbReference type="UniPathway" id="UPA00068">
    <property type="reaction ID" value="UER00108"/>
</dbReference>
<dbReference type="Proteomes" id="UP000002169">
    <property type="component" value="Chromosome 2"/>
</dbReference>
<dbReference type="GO" id="GO:0005737">
    <property type="term" value="C:cytoplasm"/>
    <property type="evidence" value="ECO:0007669"/>
    <property type="project" value="UniProtKB-SubCell"/>
</dbReference>
<dbReference type="GO" id="GO:0003942">
    <property type="term" value="F:N-acetyl-gamma-glutamyl-phosphate reductase activity"/>
    <property type="evidence" value="ECO:0007669"/>
    <property type="project" value="UniProtKB-UniRule"/>
</dbReference>
<dbReference type="GO" id="GO:0051287">
    <property type="term" value="F:NAD binding"/>
    <property type="evidence" value="ECO:0007669"/>
    <property type="project" value="InterPro"/>
</dbReference>
<dbReference type="GO" id="GO:0006526">
    <property type="term" value="P:L-arginine biosynthetic process"/>
    <property type="evidence" value="ECO:0007669"/>
    <property type="project" value="UniProtKB-UniRule"/>
</dbReference>
<dbReference type="CDD" id="cd23935">
    <property type="entry name" value="AGPR_2_C"/>
    <property type="match status" value="1"/>
</dbReference>
<dbReference type="CDD" id="cd17896">
    <property type="entry name" value="AGPR_2_N"/>
    <property type="match status" value="1"/>
</dbReference>
<dbReference type="Gene3D" id="3.30.360.10">
    <property type="entry name" value="Dihydrodipicolinate Reductase, domain 2"/>
    <property type="match status" value="1"/>
</dbReference>
<dbReference type="Gene3D" id="3.40.50.720">
    <property type="entry name" value="NAD(P)-binding Rossmann-like Domain"/>
    <property type="match status" value="1"/>
</dbReference>
<dbReference type="HAMAP" id="MF_01110">
    <property type="entry name" value="ArgC_type2"/>
    <property type="match status" value="1"/>
</dbReference>
<dbReference type="InterPro" id="IPR010136">
    <property type="entry name" value="AGPR_type-2"/>
</dbReference>
<dbReference type="InterPro" id="IPR036291">
    <property type="entry name" value="NAD(P)-bd_dom_sf"/>
</dbReference>
<dbReference type="InterPro" id="IPR050085">
    <property type="entry name" value="NAGSA_dehydrogenase"/>
</dbReference>
<dbReference type="InterPro" id="IPR000534">
    <property type="entry name" value="Semialdehyde_DH_NAD-bd"/>
</dbReference>
<dbReference type="NCBIfam" id="TIGR01851">
    <property type="entry name" value="argC_other"/>
    <property type="match status" value="1"/>
</dbReference>
<dbReference type="PANTHER" id="PTHR32338:SF10">
    <property type="entry name" value="N-ACETYL-GAMMA-GLUTAMYL-PHOSPHATE REDUCTASE, CHLOROPLASTIC-RELATED"/>
    <property type="match status" value="1"/>
</dbReference>
<dbReference type="PANTHER" id="PTHR32338">
    <property type="entry name" value="N-ACETYL-GAMMA-GLUTAMYL-PHOSPHATE REDUCTASE, CHLOROPLASTIC-RELATED-RELATED"/>
    <property type="match status" value="1"/>
</dbReference>
<dbReference type="Pfam" id="PF01118">
    <property type="entry name" value="Semialdhyde_dh"/>
    <property type="match status" value="1"/>
</dbReference>
<dbReference type="Pfam" id="PF22698">
    <property type="entry name" value="Semialdhyde_dhC_1"/>
    <property type="match status" value="1"/>
</dbReference>
<dbReference type="SMART" id="SM00859">
    <property type="entry name" value="Semialdhyde_dh"/>
    <property type="match status" value="1"/>
</dbReference>
<dbReference type="SUPFAM" id="SSF55347">
    <property type="entry name" value="Glyceraldehyde-3-phosphate dehydrogenase-like, C-terminal domain"/>
    <property type="match status" value="1"/>
</dbReference>
<dbReference type="SUPFAM" id="SSF51735">
    <property type="entry name" value="NAD(P)-binding Rossmann-fold domains"/>
    <property type="match status" value="1"/>
</dbReference>
<organism>
    <name type="scientific">Burkholderia orbicola (strain MC0-3)</name>
    <dbReference type="NCBI Taxonomy" id="406425"/>
    <lineage>
        <taxon>Bacteria</taxon>
        <taxon>Pseudomonadati</taxon>
        <taxon>Pseudomonadota</taxon>
        <taxon>Betaproteobacteria</taxon>
        <taxon>Burkholderiales</taxon>
        <taxon>Burkholderiaceae</taxon>
        <taxon>Burkholderia</taxon>
        <taxon>Burkholderia cepacia complex</taxon>
        <taxon>Burkholderia orbicola</taxon>
    </lineage>
</organism>
<feature type="chain" id="PRO_1000137111" description="N-acetyl-gamma-glutamyl-phosphate reductase">
    <location>
        <begin position="1"/>
        <end position="313"/>
    </location>
</feature>
<feature type="active site" evidence="1">
    <location>
        <position position="117"/>
    </location>
</feature>
<keyword id="KW-0028">Amino-acid biosynthesis</keyword>
<keyword id="KW-0055">Arginine biosynthesis</keyword>
<keyword id="KW-0963">Cytoplasm</keyword>
<keyword id="KW-0521">NADP</keyword>
<keyword id="KW-0560">Oxidoreductase</keyword>
<evidence type="ECO:0000255" key="1">
    <source>
        <dbReference type="HAMAP-Rule" id="MF_01110"/>
    </source>
</evidence>
<proteinExistence type="inferred from homology"/>
<gene>
    <name evidence="1" type="primary">argC</name>
    <name type="ordered locus">Bcenmc03_4530</name>
</gene>
<reference key="1">
    <citation type="submission" date="2008-02" db="EMBL/GenBank/DDBJ databases">
        <title>Complete sequence of chromosome 2 of Burkholderia cenocepacia MC0-3.</title>
        <authorList>
            <person name="Copeland A."/>
            <person name="Lucas S."/>
            <person name="Lapidus A."/>
            <person name="Barry K."/>
            <person name="Bruce D."/>
            <person name="Goodwin L."/>
            <person name="Glavina del Rio T."/>
            <person name="Dalin E."/>
            <person name="Tice H."/>
            <person name="Pitluck S."/>
            <person name="Chain P."/>
            <person name="Malfatti S."/>
            <person name="Shin M."/>
            <person name="Vergez L."/>
            <person name="Schmutz J."/>
            <person name="Larimer F."/>
            <person name="Land M."/>
            <person name="Hauser L."/>
            <person name="Kyrpides N."/>
            <person name="Mikhailova N."/>
            <person name="Tiedje J."/>
            <person name="Richardson P."/>
        </authorList>
    </citation>
    <scope>NUCLEOTIDE SEQUENCE [LARGE SCALE GENOMIC DNA]</scope>
    <source>
        <strain>MC0-3</strain>
    </source>
</reference>
<name>ARGC_BURO0</name>
<comment type="function">
    <text evidence="1">Catalyzes the NADPH-dependent reduction of N-acetyl-5-glutamyl phosphate to yield N-acetyl-L-glutamate 5-semialdehyde.</text>
</comment>
<comment type="catalytic activity">
    <reaction evidence="1">
        <text>N-acetyl-L-glutamate 5-semialdehyde + phosphate + NADP(+) = N-acetyl-L-glutamyl 5-phosphate + NADPH + H(+)</text>
        <dbReference type="Rhea" id="RHEA:21588"/>
        <dbReference type="ChEBI" id="CHEBI:15378"/>
        <dbReference type="ChEBI" id="CHEBI:29123"/>
        <dbReference type="ChEBI" id="CHEBI:43474"/>
        <dbReference type="ChEBI" id="CHEBI:57783"/>
        <dbReference type="ChEBI" id="CHEBI:57936"/>
        <dbReference type="ChEBI" id="CHEBI:58349"/>
        <dbReference type="EC" id="1.2.1.38"/>
    </reaction>
</comment>
<comment type="pathway">
    <text evidence="1">Amino-acid biosynthesis; L-arginine biosynthesis; N(2)-acetyl-L-ornithine from L-glutamate: step 3/4.</text>
</comment>
<comment type="subcellular location">
    <subcellularLocation>
        <location evidence="1">Cytoplasm</location>
    </subcellularLocation>
</comment>
<comment type="similarity">
    <text evidence="1">Belongs to the NAGSA dehydrogenase family. Type 2 subfamily.</text>
</comment>